<protein>
    <recommendedName>
        <fullName>Neurotoxin beta-KTx 52.1</fullName>
    </recommendedName>
</protein>
<feature type="signal peptide" evidence="2">
    <location>
        <begin position="1"/>
        <end position="20"/>
    </location>
</feature>
<feature type="propeptide" id="PRO_0000403846" evidence="4">
    <location>
        <begin position="21"/>
        <end position="39"/>
    </location>
</feature>
<feature type="chain" id="PRO_0000403847" description="Neurotoxin beta-KTx 52.1">
    <location>
        <begin position="40"/>
        <end position="89"/>
    </location>
</feature>
<feature type="domain" description="BetaSPN-type CS-alpha/beta" evidence="3">
    <location>
        <begin position="53"/>
        <end position="89"/>
    </location>
</feature>
<feature type="disulfide bond" evidence="3">
    <location>
        <begin position="56"/>
        <end position="76"/>
    </location>
</feature>
<feature type="disulfide bond" evidence="3">
    <location>
        <begin position="63"/>
        <end position="81"/>
    </location>
</feature>
<feature type="disulfide bond" evidence="3">
    <location>
        <begin position="67"/>
        <end position="83"/>
    </location>
</feature>
<reference key="1">
    <citation type="journal article" date="2010" name="BMC Genomics">
        <title>Comparative venom gland transcriptome analysis of the scorpion Lychas mucronatus reveals intraspecific toxic gene diversity and new venomous components.</title>
        <authorList>
            <person name="Zhao R."/>
            <person name="Ma Y."/>
            <person name="He Y."/>
            <person name="Di Z."/>
            <person name="Wu Y.-L."/>
            <person name="Cao Z.-J."/>
            <person name="Li W.-X."/>
        </authorList>
    </citation>
    <scope>NUCLEOTIDE SEQUENCE [MRNA]</scope>
    <source>
        <strain>Yunnan</strain>
        <tissue>Venom gland</tissue>
    </source>
</reference>
<proteinExistence type="inferred from homology"/>
<keyword id="KW-1015">Disulfide bond</keyword>
<keyword id="KW-0872">Ion channel impairing toxin</keyword>
<keyword id="KW-0528">Neurotoxin</keyword>
<keyword id="KW-0632">Potassium channel impairing toxin</keyword>
<keyword id="KW-0964">Secreted</keyword>
<keyword id="KW-0732">Signal</keyword>
<keyword id="KW-0800">Toxin</keyword>
<name>KBX21_LYCMC</name>
<dbReference type="EMBL" id="GT028908">
    <property type="status" value="NOT_ANNOTATED_CDS"/>
    <property type="molecule type" value="mRNA"/>
</dbReference>
<dbReference type="SMR" id="P0CJ45"/>
<dbReference type="GO" id="GO:0005576">
    <property type="term" value="C:extracellular region"/>
    <property type="evidence" value="ECO:0007669"/>
    <property type="project" value="UniProtKB-SubCell"/>
</dbReference>
<dbReference type="GO" id="GO:0015459">
    <property type="term" value="F:potassium channel regulator activity"/>
    <property type="evidence" value="ECO:0007669"/>
    <property type="project" value="UniProtKB-KW"/>
</dbReference>
<dbReference type="GO" id="GO:0090729">
    <property type="term" value="F:toxin activity"/>
    <property type="evidence" value="ECO:0007669"/>
    <property type="project" value="UniProtKB-KW"/>
</dbReference>
<dbReference type="InterPro" id="IPR029237">
    <property type="entry name" value="Long_scorpion_toxin_alpha/beta"/>
</dbReference>
<dbReference type="Pfam" id="PF14866">
    <property type="entry name" value="Scorpion_toxin_alpha-beta"/>
    <property type="match status" value="1"/>
</dbReference>
<dbReference type="PROSITE" id="PS51862">
    <property type="entry name" value="BSPN_CSAB"/>
    <property type="match status" value="1"/>
</dbReference>
<sequence>MKQYIFFLALIVLTATFAEAGKKTEILDKVKKVFSKAKDKVLAGVEDLNNMSELGCPFIDKWCEDHCDSKKLVGKCENFDCSCVKLGGK</sequence>
<organism>
    <name type="scientific">Lychas mucronatus</name>
    <name type="common">Chinese swimming scorpion</name>
    <dbReference type="NCBI Taxonomy" id="172552"/>
    <lineage>
        <taxon>Eukaryota</taxon>
        <taxon>Metazoa</taxon>
        <taxon>Ecdysozoa</taxon>
        <taxon>Arthropoda</taxon>
        <taxon>Chelicerata</taxon>
        <taxon>Arachnida</taxon>
        <taxon>Scorpiones</taxon>
        <taxon>Buthida</taxon>
        <taxon>Buthoidea</taxon>
        <taxon>Buthidae</taxon>
        <taxon>Lychas</taxon>
    </lineage>
</organism>
<comment type="function">
    <text evidence="1">Inhibits voltage-gated potassium channel.</text>
</comment>
<comment type="subcellular location">
    <subcellularLocation>
        <location evidence="5">Secreted</location>
    </subcellularLocation>
</comment>
<comment type="tissue specificity">
    <text evidence="5">Expressed by the venom gland.</text>
</comment>
<comment type="similarity">
    <text evidence="4">Belongs to the long chain scorpion toxin family. Class 2 subfamily.</text>
</comment>
<accession>P0CJ45</accession>
<evidence type="ECO:0000250" key="1">
    <source>
        <dbReference type="UniProtKB" id="Q9NJC6"/>
    </source>
</evidence>
<evidence type="ECO:0000255" key="2"/>
<evidence type="ECO:0000255" key="3">
    <source>
        <dbReference type="PROSITE-ProRule" id="PRU01209"/>
    </source>
</evidence>
<evidence type="ECO:0000305" key="4"/>
<evidence type="ECO:0000305" key="5">
    <source>
    </source>
</evidence>